<protein>
    <recommendedName>
        <fullName evidence="1">Phosphoserine aminotransferase</fullName>
        <ecNumber evidence="1">2.6.1.52</ecNumber>
    </recommendedName>
    <alternativeName>
        <fullName evidence="1">Phosphohydroxythreonine aminotransferase</fullName>
        <shortName evidence="1">PSAT</shortName>
    </alternativeName>
</protein>
<name>SERC_SHIBS</name>
<gene>
    <name evidence="1" type="primary">serC</name>
    <name type="ordered locus">SBO_2193</name>
</gene>
<feature type="chain" id="PRO_1000203579" description="Phosphoserine aminotransferase">
    <location>
        <begin position="1"/>
        <end position="362"/>
    </location>
</feature>
<feature type="binding site" evidence="1">
    <location>
        <position position="9"/>
    </location>
    <ligand>
        <name>L-glutamate</name>
        <dbReference type="ChEBI" id="CHEBI:29985"/>
    </ligand>
</feature>
<feature type="binding site" evidence="1">
    <location>
        <position position="42"/>
    </location>
    <ligand>
        <name>L-glutamate</name>
        <dbReference type="ChEBI" id="CHEBI:29985"/>
    </ligand>
</feature>
<feature type="binding site" evidence="1">
    <location>
        <begin position="76"/>
        <end position="77"/>
    </location>
    <ligand>
        <name>pyridoxal 5'-phosphate</name>
        <dbReference type="ChEBI" id="CHEBI:597326"/>
    </ligand>
</feature>
<feature type="binding site" evidence="1">
    <location>
        <position position="102"/>
    </location>
    <ligand>
        <name>pyridoxal 5'-phosphate</name>
        <dbReference type="ChEBI" id="CHEBI:597326"/>
    </ligand>
</feature>
<feature type="binding site" evidence="1">
    <location>
        <position position="153"/>
    </location>
    <ligand>
        <name>pyridoxal 5'-phosphate</name>
        <dbReference type="ChEBI" id="CHEBI:597326"/>
    </ligand>
</feature>
<feature type="binding site" evidence="1">
    <location>
        <position position="174"/>
    </location>
    <ligand>
        <name>pyridoxal 5'-phosphate</name>
        <dbReference type="ChEBI" id="CHEBI:597326"/>
    </ligand>
</feature>
<feature type="binding site" evidence="1">
    <location>
        <position position="197"/>
    </location>
    <ligand>
        <name>pyridoxal 5'-phosphate</name>
        <dbReference type="ChEBI" id="CHEBI:597326"/>
    </ligand>
</feature>
<feature type="binding site" evidence="1">
    <location>
        <begin position="239"/>
        <end position="240"/>
    </location>
    <ligand>
        <name>pyridoxal 5'-phosphate</name>
        <dbReference type="ChEBI" id="CHEBI:597326"/>
    </ligand>
</feature>
<feature type="modified residue" description="N6-(pyridoxal phosphate)lysine" evidence="1">
    <location>
        <position position="198"/>
    </location>
</feature>
<keyword id="KW-0028">Amino-acid biosynthesis</keyword>
<keyword id="KW-0032">Aminotransferase</keyword>
<keyword id="KW-0963">Cytoplasm</keyword>
<keyword id="KW-0663">Pyridoxal phosphate</keyword>
<keyword id="KW-0664">Pyridoxine biosynthesis</keyword>
<keyword id="KW-0718">Serine biosynthesis</keyword>
<keyword id="KW-0808">Transferase</keyword>
<dbReference type="EC" id="2.6.1.52" evidence="1"/>
<dbReference type="EMBL" id="CP000036">
    <property type="protein sequence ID" value="ABB66764.1"/>
    <property type="molecule type" value="Genomic_DNA"/>
</dbReference>
<dbReference type="RefSeq" id="WP_000057140.1">
    <property type="nucleotide sequence ID" value="NC_007613.1"/>
</dbReference>
<dbReference type="SMR" id="Q31YU4"/>
<dbReference type="KEGG" id="sbo:SBO_2193"/>
<dbReference type="HOGENOM" id="CLU_034866_0_2_6"/>
<dbReference type="UniPathway" id="UPA00135">
    <property type="reaction ID" value="UER00197"/>
</dbReference>
<dbReference type="UniPathway" id="UPA00244">
    <property type="reaction ID" value="UER00311"/>
</dbReference>
<dbReference type="Proteomes" id="UP000007067">
    <property type="component" value="Chromosome"/>
</dbReference>
<dbReference type="GO" id="GO:0005737">
    <property type="term" value="C:cytoplasm"/>
    <property type="evidence" value="ECO:0007669"/>
    <property type="project" value="UniProtKB-SubCell"/>
</dbReference>
<dbReference type="GO" id="GO:0004648">
    <property type="term" value="F:O-phospho-L-serine:2-oxoglutarate aminotransferase activity"/>
    <property type="evidence" value="ECO:0007669"/>
    <property type="project" value="UniProtKB-UniRule"/>
</dbReference>
<dbReference type="GO" id="GO:0030170">
    <property type="term" value="F:pyridoxal phosphate binding"/>
    <property type="evidence" value="ECO:0007669"/>
    <property type="project" value="UniProtKB-UniRule"/>
</dbReference>
<dbReference type="GO" id="GO:0006564">
    <property type="term" value="P:L-serine biosynthetic process"/>
    <property type="evidence" value="ECO:0007669"/>
    <property type="project" value="UniProtKB-UniRule"/>
</dbReference>
<dbReference type="GO" id="GO:0008615">
    <property type="term" value="P:pyridoxine biosynthetic process"/>
    <property type="evidence" value="ECO:0007669"/>
    <property type="project" value="UniProtKB-UniRule"/>
</dbReference>
<dbReference type="CDD" id="cd00611">
    <property type="entry name" value="PSAT_like"/>
    <property type="match status" value="1"/>
</dbReference>
<dbReference type="FunFam" id="3.40.640.10:FF:000010">
    <property type="entry name" value="Phosphoserine aminotransferase"/>
    <property type="match status" value="1"/>
</dbReference>
<dbReference type="FunFam" id="3.90.1150.10:FF:000006">
    <property type="entry name" value="Phosphoserine aminotransferase"/>
    <property type="match status" value="1"/>
</dbReference>
<dbReference type="Gene3D" id="3.90.1150.10">
    <property type="entry name" value="Aspartate Aminotransferase, domain 1"/>
    <property type="match status" value="1"/>
</dbReference>
<dbReference type="Gene3D" id="3.40.640.10">
    <property type="entry name" value="Type I PLP-dependent aspartate aminotransferase-like (Major domain)"/>
    <property type="match status" value="1"/>
</dbReference>
<dbReference type="HAMAP" id="MF_00160">
    <property type="entry name" value="SerC_aminotrans_5"/>
    <property type="match status" value="1"/>
</dbReference>
<dbReference type="InterPro" id="IPR000192">
    <property type="entry name" value="Aminotrans_V_dom"/>
</dbReference>
<dbReference type="InterPro" id="IPR020578">
    <property type="entry name" value="Aminotrans_V_PyrdxlP_BS"/>
</dbReference>
<dbReference type="InterPro" id="IPR022278">
    <property type="entry name" value="Pser_aminoTfrase"/>
</dbReference>
<dbReference type="InterPro" id="IPR015424">
    <property type="entry name" value="PyrdxlP-dep_Trfase"/>
</dbReference>
<dbReference type="InterPro" id="IPR015421">
    <property type="entry name" value="PyrdxlP-dep_Trfase_major"/>
</dbReference>
<dbReference type="InterPro" id="IPR015422">
    <property type="entry name" value="PyrdxlP-dep_Trfase_small"/>
</dbReference>
<dbReference type="NCBIfam" id="NF003764">
    <property type="entry name" value="PRK05355.1"/>
    <property type="match status" value="1"/>
</dbReference>
<dbReference type="NCBIfam" id="TIGR01364">
    <property type="entry name" value="serC_1"/>
    <property type="match status" value="1"/>
</dbReference>
<dbReference type="PANTHER" id="PTHR43247">
    <property type="entry name" value="PHOSPHOSERINE AMINOTRANSFERASE"/>
    <property type="match status" value="1"/>
</dbReference>
<dbReference type="PANTHER" id="PTHR43247:SF1">
    <property type="entry name" value="PHOSPHOSERINE AMINOTRANSFERASE"/>
    <property type="match status" value="1"/>
</dbReference>
<dbReference type="Pfam" id="PF00266">
    <property type="entry name" value="Aminotran_5"/>
    <property type="match status" value="1"/>
</dbReference>
<dbReference type="PIRSF" id="PIRSF000525">
    <property type="entry name" value="SerC"/>
    <property type="match status" value="1"/>
</dbReference>
<dbReference type="SUPFAM" id="SSF53383">
    <property type="entry name" value="PLP-dependent transferases"/>
    <property type="match status" value="1"/>
</dbReference>
<dbReference type="PROSITE" id="PS00595">
    <property type="entry name" value="AA_TRANSFER_CLASS_5"/>
    <property type="match status" value="1"/>
</dbReference>
<proteinExistence type="inferred from homology"/>
<organism>
    <name type="scientific">Shigella boydii serotype 4 (strain Sb227)</name>
    <dbReference type="NCBI Taxonomy" id="300268"/>
    <lineage>
        <taxon>Bacteria</taxon>
        <taxon>Pseudomonadati</taxon>
        <taxon>Pseudomonadota</taxon>
        <taxon>Gammaproteobacteria</taxon>
        <taxon>Enterobacterales</taxon>
        <taxon>Enterobacteriaceae</taxon>
        <taxon>Shigella</taxon>
    </lineage>
</organism>
<comment type="function">
    <text evidence="1">Catalyzes the reversible conversion of 3-phosphohydroxypyruvate to phosphoserine and of 3-hydroxy-2-oxo-4-phosphonooxybutanoate to phosphohydroxythreonine.</text>
</comment>
<comment type="catalytic activity">
    <reaction evidence="1">
        <text>O-phospho-L-serine + 2-oxoglutarate = 3-phosphooxypyruvate + L-glutamate</text>
        <dbReference type="Rhea" id="RHEA:14329"/>
        <dbReference type="ChEBI" id="CHEBI:16810"/>
        <dbReference type="ChEBI" id="CHEBI:18110"/>
        <dbReference type="ChEBI" id="CHEBI:29985"/>
        <dbReference type="ChEBI" id="CHEBI:57524"/>
        <dbReference type="EC" id="2.6.1.52"/>
    </reaction>
</comment>
<comment type="catalytic activity">
    <reaction evidence="1">
        <text>4-(phosphooxy)-L-threonine + 2-oxoglutarate = (R)-3-hydroxy-2-oxo-4-phosphooxybutanoate + L-glutamate</text>
        <dbReference type="Rhea" id="RHEA:16573"/>
        <dbReference type="ChEBI" id="CHEBI:16810"/>
        <dbReference type="ChEBI" id="CHEBI:29985"/>
        <dbReference type="ChEBI" id="CHEBI:58452"/>
        <dbReference type="ChEBI" id="CHEBI:58538"/>
        <dbReference type="EC" id="2.6.1.52"/>
    </reaction>
</comment>
<comment type="cofactor">
    <cofactor evidence="1">
        <name>pyridoxal 5'-phosphate</name>
        <dbReference type="ChEBI" id="CHEBI:597326"/>
    </cofactor>
    <text evidence="1">Binds 1 pyridoxal phosphate per subunit.</text>
</comment>
<comment type="pathway">
    <text evidence="1">Amino-acid biosynthesis; L-serine biosynthesis; L-serine from 3-phospho-D-glycerate: step 2/3.</text>
</comment>
<comment type="pathway">
    <text evidence="1">Cofactor biosynthesis; pyridoxine 5'-phosphate biosynthesis; pyridoxine 5'-phosphate from D-erythrose 4-phosphate: step 3/5.</text>
</comment>
<comment type="subunit">
    <text evidence="1">Homodimer.</text>
</comment>
<comment type="subcellular location">
    <subcellularLocation>
        <location evidence="1">Cytoplasm</location>
    </subcellularLocation>
</comment>
<comment type="similarity">
    <text evidence="1">Belongs to the class-V pyridoxal-phosphate-dependent aminotransferase family. SerC subfamily.</text>
</comment>
<reference key="1">
    <citation type="journal article" date="2005" name="Nucleic Acids Res.">
        <title>Genome dynamics and diversity of Shigella species, the etiologic agents of bacillary dysentery.</title>
        <authorList>
            <person name="Yang F."/>
            <person name="Yang J."/>
            <person name="Zhang X."/>
            <person name="Chen L."/>
            <person name="Jiang Y."/>
            <person name="Yan Y."/>
            <person name="Tang X."/>
            <person name="Wang J."/>
            <person name="Xiong Z."/>
            <person name="Dong J."/>
            <person name="Xue Y."/>
            <person name="Zhu Y."/>
            <person name="Xu X."/>
            <person name="Sun L."/>
            <person name="Chen S."/>
            <person name="Nie H."/>
            <person name="Peng J."/>
            <person name="Xu J."/>
            <person name="Wang Y."/>
            <person name="Yuan Z."/>
            <person name="Wen Y."/>
            <person name="Yao Z."/>
            <person name="Shen Y."/>
            <person name="Qiang B."/>
            <person name="Hou Y."/>
            <person name="Yu J."/>
            <person name="Jin Q."/>
        </authorList>
    </citation>
    <scope>NUCLEOTIDE SEQUENCE [LARGE SCALE GENOMIC DNA]</scope>
    <source>
        <strain>Sb227</strain>
    </source>
</reference>
<accession>Q31YU4</accession>
<sequence>MAQIFNFSSGPAMLPAEVLKQAQQELRDWNGLGTSVMEVSHRGKEFIQVAEEAEKDFRDLLNVPSNYKVLFCHGGGRGQFAAVPLNILGDKTTADYVDAGYWAASAIKEAKKYCTPNVFDAKVTVDGLRAVKPMREWQLSDNAAYMHYCPNETIDGIAIDETPDFGKDVVVAADFSSTILSRPIDVSRYGVIYAGAQKNIGPAGLTIVIVREDLLGKANIACPSILDYSIFNDNGSMFNTPPTFAWYLSGLVFKWLKANGGVAEMDKINQQKAELLYGVIDNSDFYRNDVAKANRSRMNVPFQLADSALDKLFLEESFAAGLHALKGHRVVGGMRASIYNAMPLEGVKALTDFMVEFERRHG</sequence>
<evidence type="ECO:0000255" key="1">
    <source>
        <dbReference type="HAMAP-Rule" id="MF_00160"/>
    </source>
</evidence>